<evidence type="ECO:0000269" key="1">
    <source>
    </source>
</evidence>
<evidence type="ECO:0000303" key="2">
    <source>
    </source>
</evidence>
<evidence type="ECO:0000305" key="3"/>
<evidence type="ECO:0000305" key="4">
    <source>
    </source>
</evidence>
<accession>C0HLB9</accession>
<sequence>LTWKIPTRFCGVT</sequence>
<comment type="subcellular location">
    <subcellularLocation>
        <location evidence="1">Secreted</location>
    </subcellularLocation>
</comment>
<comment type="tissue specificity">
    <text evidence="4">Expressed by the skin glands.</text>
</comment>
<comment type="mass spectrometry"/>
<dbReference type="GO" id="GO:0005576">
    <property type="term" value="C:extracellular region"/>
    <property type="evidence" value="ECO:0007669"/>
    <property type="project" value="UniProtKB-SubCell"/>
</dbReference>
<feature type="peptide" id="PRO_0000445207" description="Antioxidin-TR" evidence="1">
    <location>
        <begin position="1"/>
        <end position="13"/>
    </location>
</feature>
<proteinExistence type="evidence at protein level"/>
<reference evidence="3" key="1">
    <citation type="journal article" date="2018" name="Comp. Biochem. Physiol.">
        <title>Peptidomic analysis of the host-defense peptides in skin secretions of the Trinidadian leaf frog Phyllomedusa trinitatis (Phyllomedusidae).</title>
        <authorList>
            <person name="Mechkarska M."/>
            <person name="Coquet L."/>
            <person name="Leprince J."/>
            <person name="Auguste R.J."/>
            <person name="Jouenne T."/>
            <person name="Mangoni M.L."/>
            <person name="Conlon J.M."/>
        </authorList>
    </citation>
    <scope>PROTEIN SEQUENCE</scope>
    <scope>SUBCELLULAR LOCATION</scope>
    <scope>MASS SPECTROMETRY</scope>
    <source>
        <tissue evidence="2">Skin secretion</tissue>
    </source>
</reference>
<organism evidence="2">
    <name type="scientific">Phyllomedusa trinitatis</name>
    <name type="common">Trinidad leaf frog</name>
    <dbReference type="NCBI Taxonomy" id="332092"/>
    <lineage>
        <taxon>Eukaryota</taxon>
        <taxon>Metazoa</taxon>
        <taxon>Chordata</taxon>
        <taxon>Craniata</taxon>
        <taxon>Vertebrata</taxon>
        <taxon>Euteleostomi</taxon>
        <taxon>Amphibia</taxon>
        <taxon>Batrachia</taxon>
        <taxon>Anura</taxon>
        <taxon>Neobatrachia</taxon>
        <taxon>Hyloidea</taxon>
        <taxon>Hylidae</taxon>
        <taxon>Phyllomedusinae</taxon>
        <taxon>Phyllomedusa</taxon>
    </lineage>
</organism>
<protein>
    <recommendedName>
        <fullName evidence="2">Antioxidin-TR</fullName>
    </recommendedName>
</protein>
<keyword id="KW-0903">Direct protein sequencing</keyword>
<keyword id="KW-0964">Secreted</keyword>
<name>ATOX_PHYTB</name>